<organism>
    <name type="scientific">Phleum pratense</name>
    <name type="common">Common timothy</name>
    <dbReference type="NCBI Taxonomy" id="15957"/>
    <lineage>
        <taxon>Eukaryota</taxon>
        <taxon>Viridiplantae</taxon>
        <taxon>Streptophyta</taxon>
        <taxon>Embryophyta</taxon>
        <taxon>Tracheophyta</taxon>
        <taxon>Spermatophyta</taxon>
        <taxon>Magnoliopsida</taxon>
        <taxon>Liliopsida</taxon>
        <taxon>Poales</taxon>
        <taxon>Poaceae</taxon>
        <taxon>BOP clade</taxon>
        <taxon>Pooideae</taxon>
        <taxon>Poodae</taxon>
        <taxon>Poeae</taxon>
        <taxon>Poeae Chloroplast Group 2 (Poeae type)</taxon>
        <taxon>Poodinae</taxon>
        <taxon>Phleinae</taxon>
        <taxon>Phleum</taxon>
    </lineage>
</organism>
<reference key="1">
    <citation type="journal article" date="2012" name="PLoS ONE">
        <title>Characterization of profilin polymorphism in pollen with a focus on multifunctionality.</title>
        <authorList>
            <person name="Jimenez-Lopez J.C."/>
            <person name="Morales S."/>
            <person name="Castro A.J."/>
            <person name="Volkmann D."/>
            <person name="Rodriguez-Garcia M.I."/>
            <person name="Alche Jde D."/>
        </authorList>
    </citation>
    <scope>NUCLEOTIDE SEQUENCE [MRNA]</scope>
    <scope>POLYMORPHISM</scope>
    <source>
        <strain>cv. Pratense</strain>
    </source>
</reference>
<reference key="2">
    <citation type="journal article" date="2013" name="PLoS ONE">
        <title>Analysis of the effects of polymorphism on pollen profilin structural functionality and the generation of conformational, T- and B-cell epitopes.</title>
        <authorList>
            <person name="Jimenez-Lopez J.C."/>
            <person name="Rodriguez-Garcia M.I."/>
            <person name="Alche J.D."/>
        </authorList>
    </citation>
    <scope>3D-STRUCTURE MODELING</scope>
    <scope>DISULFIDE BOND</scope>
</reference>
<feature type="initiator methionine" description="Removed" evidence="1">
    <location>
        <position position="1"/>
    </location>
</feature>
<feature type="chain" id="PRO_0000425062" description="Profilin-8">
    <location>
        <begin position="2"/>
        <end position="131"/>
    </location>
</feature>
<feature type="short sequence motif" description="Involved in PIP2 interaction">
    <location>
        <begin position="81"/>
        <end position="97"/>
    </location>
</feature>
<feature type="modified residue" description="Phosphothreonine" evidence="1">
    <location>
        <position position="111"/>
    </location>
</feature>
<feature type="disulfide bond" evidence="3">
    <location>
        <begin position="13"/>
        <end position="115"/>
    </location>
</feature>
<protein>
    <recommendedName>
        <fullName>Profilin-8</fullName>
    </recommendedName>
    <alternativeName>
        <fullName>Pollen allergen Phl p 12</fullName>
    </alternativeName>
    <alternativeName>
        <fullName>pollen profilin variant 6</fullName>
    </alternativeName>
    <allergenName>Phl p 12</allergenName>
</protein>
<accession>A4KA36</accession>
<proteinExistence type="evidence at protein level"/>
<keyword id="KW-0009">Actin-binding</keyword>
<keyword id="KW-0020">Allergen</keyword>
<keyword id="KW-0963">Cytoplasm</keyword>
<keyword id="KW-0206">Cytoskeleton</keyword>
<keyword id="KW-1015">Disulfide bond</keyword>
<keyword id="KW-0597">Phosphoprotein</keyword>
<sequence length="131" mass="14129">MSWQAYVDEHLMCEIEGHHLASAAILGHDGTVWAQSADFPQFKPEEITGIMKDFDEPGHLAPTGMFVAAAKYMVIQGEPGAVIRGKKGAGGITIKKTGQALVVGIYDEPMTPGQCNMVVERLGDYLLKQGL</sequence>
<name>PROF8_PHLPR</name>
<evidence type="ECO:0000250" key="1"/>
<evidence type="ECO:0000305" key="2"/>
<evidence type="ECO:0000305" key="3">
    <source>
    </source>
</evidence>
<dbReference type="EMBL" id="DQ663540">
    <property type="protein sequence ID" value="ABG81293.1"/>
    <property type="molecule type" value="mRNA"/>
</dbReference>
<dbReference type="SMR" id="A4KA36"/>
<dbReference type="Allergome" id="553">
    <property type="allergen name" value="Phl p 12"/>
</dbReference>
<dbReference type="GO" id="GO:0005938">
    <property type="term" value="C:cell cortex"/>
    <property type="evidence" value="ECO:0007669"/>
    <property type="project" value="TreeGrafter"/>
</dbReference>
<dbReference type="GO" id="GO:0005856">
    <property type="term" value="C:cytoskeleton"/>
    <property type="evidence" value="ECO:0007669"/>
    <property type="project" value="UniProtKB-SubCell"/>
</dbReference>
<dbReference type="GO" id="GO:0003785">
    <property type="term" value="F:actin monomer binding"/>
    <property type="evidence" value="ECO:0007669"/>
    <property type="project" value="TreeGrafter"/>
</dbReference>
<dbReference type="CDD" id="cd00148">
    <property type="entry name" value="PROF"/>
    <property type="match status" value="1"/>
</dbReference>
<dbReference type="FunFam" id="3.30.450.30:FF:000001">
    <property type="entry name" value="Profilin"/>
    <property type="match status" value="1"/>
</dbReference>
<dbReference type="Gene3D" id="3.30.450.30">
    <property type="entry name" value="Dynein light chain 2a, cytoplasmic"/>
    <property type="match status" value="1"/>
</dbReference>
<dbReference type="InterPro" id="IPR048278">
    <property type="entry name" value="PFN"/>
</dbReference>
<dbReference type="InterPro" id="IPR005455">
    <property type="entry name" value="PFN_euk"/>
</dbReference>
<dbReference type="InterPro" id="IPR036140">
    <property type="entry name" value="PFN_sf"/>
</dbReference>
<dbReference type="InterPro" id="IPR027310">
    <property type="entry name" value="Profilin_CS"/>
</dbReference>
<dbReference type="PANTHER" id="PTHR11604">
    <property type="entry name" value="PROFILIN"/>
    <property type="match status" value="1"/>
</dbReference>
<dbReference type="PANTHER" id="PTHR11604:SF31">
    <property type="entry name" value="PROFILIN"/>
    <property type="match status" value="1"/>
</dbReference>
<dbReference type="Pfam" id="PF00235">
    <property type="entry name" value="Profilin"/>
    <property type="match status" value="1"/>
</dbReference>
<dbReference type="PRINTS" id="PR00392">
    <property type="entry name" value="PROFILIN"/>
</dbReference>
<dbReference type="PRINTS" id="PR01640">
    <property type="entry name" value="PROFILINPLNT"/>
</dbReference>
<dbReference type="SMART" id="SM00392">
    <property type="entry name" value="PROF"/>
    <property type="match status" value="1"/>
</dbReference>
<dbReference type="SUPFAM" id="SSF55770">
    <property type="entry name" value="Profilin (actin-binding protein)"/>
    <property type="match status" value="1"/>
</dbReference>
<dbReference type="PROSITE" id="PS00414">
    <property type="entry name" value="PROFILIN"/>
    <property type="match status" value="1"/>
</dbReference>
<comment type="function">
    <text evidence="1">Binds to actin and affects the structure of the cytoskeleton. At high concentrations, profilin prevents the polymerization of actin, whereas it enhances it at low concentrations (By similarity).</text>
</comment>
<comment type="subunit">
    <text evidence="1">Occurs in many kinds of cells as a complex with monomeric actin in a 1:1 ratio.</text>
</comment>
<comment type="subcellular location">
    <subcellularLocation>
        <location evidence="1">Cytoplasm</location>
        <location evidence="1">Cytoskeleton</location>
    </subcellularLocation>
</comment>
<comment type="PTM">
    <text evidence="1">Phosphorylated by MAP kinases.</text>
</comment>
<comment type="polymorphism">
    <text>Several isoforms of the allergen exist due to polymorphism.</text>
</comment>
<comment type="allergen">
    <text>Causes an allergic reaction in human.</text>
</comment>
<comment type="miscellaneous">
    <text evidence="3">The variability of the residues taking part of IgE-binding epitopes might be responsible of the difference in cross-reactivity among olive pollen cultivars, and between distantly related pollen species, leading to a variable range of allergy reactions among atopic patients.</text>
</comment>
<comment type="similarity">
    <text evidence="2">Belongs to the profilin family.</text>
</comment>